<name>TAT_HV1A2</name>
<evidence type="ECO:0000255" key="1">
    <source>
        <dbReference type="HAMAP-Rule" id="MF_04079"/>
    </source>
</evidence>
<evidence type="ECO:0000256" key="2">
    <source>
        <dbReference type="SAM" id="MobiDB-lite"/>
    </source>
</evidence>
<evidence type="ECO:0000305" key="3"/>
<reference key="1">
    <citation type="journal article" date="1985" name="Science">
        <title>Nucleotide sequence and expression of an AIDS-associated retrovirus (ARV-2).</title>
        <authorList>
            <person name="Sanchez-Pescador R."/>
            <person name="Power M.D."/>
            <person name="Barr P.J."/>
            <person name="Steimer K.S."/>
            <person name="Stempien M.M."/>
            <person name="Brown-Shimer S.L."/>
            <person name="Gee W.W."/>
            <person name="Renard A."/>
            <person name="Randolph A."/>
            <person name="Levy J.A."/>
            <person name="Dina D."/>
            <person name="Luciw P.A."/>
        </authorList>
    </citation>
    <scope>NUCLEOTIDE SEQUENCE [GENOMIC RNA]</scope>
</reference>
<reference key="2">
    <citation type="journal article" date="2005" name="Microbes Infect.">
        <title>Decoding Tat: the biology of HIV Tat posttranslational modifications.</title>
        <authorList>
            <person name="Hetzer C."/>
            <person name="Dormeyer W."/>
            <person name="Schnolzer M."/>
            <person name="Ott M."/>
        </authorList>
    </citation>
    <scope>REVIEW</scope>
    <scope>ALTERNATIVE SPLICING</scope>
</reference>
<reference key="3">
    <citation type="journal article" date="2006" name="Front. Biosci.">
        <title>The multiple functions of HIV-1 Tat: proliferation versus apoptosis.</title>
        <authorList>
            <person name="Peruzzi F."/>
        </authorList>
    </citation>
    <scope>REVIEW</scope>
</reference>
<reference key="4">
    <citation type="journal article" date="2006" name="Microbes Infect.">
        <title>HIV tat and neurotoxicity.</title>
        <authorList>
            <person name="King J.E."/>
            <person name="Eugenin E.A."/>
            <person name="Buckner C.M."/>
            <person name="Berman J.W."/>
        </authorList>
    </citation>
    <scope>REVIEW</scope>
</reference>
<dbReference type="EMBL" id="K02007">
    <property type="protein sequence ID" value="AAB59879.1"/>
    <property type="molecule type" value="Genomic_RNA"/>
</dbReference>
<dbReference type="SMR" id="P04614"/>
<dbReference type="Proteomes" id="UP000007688">
    <property type="component" value="Genome"/>
</dbReference>
<dbReference type="GO" id="GO:0005576">
    <property type="term" value="C:extracellular region"/>
    <property type="evidence" value="ECO:0007669"/>
    <property type="project" value="UniProtKB-SubCell"/>
</dbReference>
<dbReference type="GO" id="GO:0030430">
    <property type="term" value="C:host cell cytoplasm"/>
    <property type="evidence" value="ECO:0007669"/>
    <property type="project" value="UniProtKB-SubCell"/>
</dbReference>
<dbReference type="GO" id="GO:0044196">
    <property type="term" value="C:host cell nucleolus"/>
    <property type="evidence" value="ECO:0007669"/>
    <property type="project" value="UniProtKB-SubCell"/>
</dbReference>
<dbReference type="GO" id="GO:0042805">
    <property type="term" value="F:actinin binding"/>
    <property type="evidence" value="ECO:0007669"/>
    <property type="project" value="UniProtKB-UniRule"/>
</dbReference>
<dbReference type="GO" id="GO:0030332">
    <property type="term" value="F:cyclin binding"/>
    <property type="evidence" value="ECO:0007669"/>
    <property type="project" value="UniProtKB-UniRule"/>
</dbReference>
<dbReference type="GO" id="GO:0046872">
    <property type="term" value="F:metal ion binding"/>
    <property type="evidence" value="ECO:0007669"/>
    <property type="project" value="UniProtKB-UniRule"/>
</dbReference>
<dbReference type="GO" id="GO:0019904">
    <property type="term" value="F:protein domain specific binding"/>
    <property type="evidence" value="ECO:0007669"/>
    <property type="project" value="UniProtKB-UniRule"/>
</dbReference>
<dbReference type="GO" id="GO:0004865">
    <property type="term" value="F:protein serine/threonine phosphatase inhibitor activity"/>
    <property type="evidence" value="ECO:0007669"/>
    <property type="project" value="UniProtKB-KW"/>
</dbReference>
<dbReference type="GO" id="GO:0001070">
    <property type="term" value="F:RNA-binding transcription regulator activity"/>
    <property type="evidence" value="ECO:0007669"/>
    <property type="project" value="UniProtKB-UniRule"/>
</dbReference>
<dbReference type="GO" id="GO:1990970">
    <property type="term" value="F:trans-activation response element binding"/>
    <property type="evidence" value="ECO:0007669"/>
    <property type="project" value="UniProtKB-UniRule"/>
</dbReference>
<dbReference type="GO" id="GO:0006351">
    <property type="term" value="P:DNA-templated transcription"/>
    <property type="evidence" value="ECO:0007669"/>
    <property type="project" value="UniProtKB-UniRule"/>
</dbReference>
<dbReference type="GO" id="GO:0032968">
    <property type="term" value="P:positive regulation of transcription elongation by RNA polymerase II"/>
    <property type="evidence" value="ECO:0007669"/>
    <property type="project" value="UniProtKB-UniRule"/>
</dbReference>
<dbReference type="GO" id="GO:0050434">
    <property type="term" value="P:positive regulation of viral transcription"/>
    <property type="evidence" value="ECO:0007669"/>
    <property type="project" value="UniProtKB-UniRule"/>
</dbReference>
<dbReference type="GO" id="GO:0039525">
    <property type="term" value="P:symbiont-mediated perturbation of host chromatin organization"/>
    <property type="evidence" value="ECO:0007669"/>
    <property type="project" value="UniProtKB-UniRule"/>
</dbReference>
<dbReference type="GO" id="GO:0052170">
    <property type="term" value="P:symbiont-mediated suppression of host innate immune response"/>
    <property type="evidence" value="ECO:0007669"/>
    <property type="project" value="UniProtKB-KW"/>
</dbReference>
<dbReference type="GO" id="GO:0039606">
    <property type="term" value="P:symbiont-mediated suppression of host translation initiation"/>
    <property type="evidence" value="ECO:0007669"/>
    <property type="project" value="UniProtKB-KW"/>
</dbReference>
<dbReference type="GO" id="GO:0039502">
    <property type="term" value="P:symbiont-mediated suppression of host type I interferon-mediated signaling pathway"/>
    <property type="evidence" value="ECO:0007669"/>
    <property type="project" value="UniProtKB-UniRule"/>
</dbReference>
<dbReference type="Gene3D" id="4.10.20.10">
    <property type="entry name" value="Tat domain"/>
    <property type="match status" value="1"/>
</dbReference>
<dbReference type="HAMAP" id="MF_04079">
    <property type="entry name" value="HIV_TAT"/>
    <property type="match status" value="1"/>
</dbReference>
<dbReference type="InterPro" id="IPR001831">
    <property type="entry name" value="IV_Tat"/>
</dbReference>
<dbReference type="InterPro" id="IPR036963">
    <property type="entry name" value="Tat_dom_sf"/>
</dbReference>
<dbReference type="Pfam" id="PF00539">
    <property type="entry name" value="Tat"/>
    <property type="match status" value="1"/>
</dbReference>
<dbReference type="PRINTS" id="PR00055">
    <property type="entry name" value="HIVTATDOMAIN"/>
</dbReference>
<feature type="chain" id="PRO_0000085345" description="Protein Tat">
    <location>
        <begin position="1"/>
        <end position="101"/>
    </location>
</feature>
<feature type="region of interest" description="Transactivation" evidence="1">
    <location>
        <begin position="1"/>
        <end position="48"/>
    </location>
</feature>
<feature type="region of interest" description="Interaction with human CREBBP" evidence="1">
    <location>
        <begin position="1"/>
        <end position="24"/>
    </location>
</feature>
<feature type="region of interest" description="Cysteine-rich" evidence="1">
    <location>
        <begin position="22"/>
        <end position="37"/>
    </location>
</feature>
<feature type="region of interest" description="Core" evidence="1">
    <location>
        <begin position="38"/>
        <end position="48"/>
    </location>
</feature>
<feature type="region of interest" description="Disordered" evidence="2">
    <location>
        <begin position="48"/>
        <end position="101"/>
    </location>
</feature>
<feature type="region of interest" description="Interaction with the host capping enzyme RNGTT" evidence="1">
    <location>
        <begin position="49"/>
        <end position="86"/>
    </location>
</feature>
<feature type="short sequence motif" description="Nuclear localization signal, RNA-binding (TAR), and protein transduction" evidence="1">
    <location>
        <begin position="49"/>
        <end position="57"/>
    </location>
</feature>
<feature type="short sequence motif" description="Cell attachment site" evidence="1">
    <location>
        <begin position="78"/>
        <end position="80"/>
    </location>
</feature>
<feature type="compositionally biased region" description="Basic residues" evidence="2">
    <location>
        <begin position="48"/>
        <end position="57"/>
    </location>
</feature>
<feature type="compositionally biased region" description="Polar residues" evidence="2">
    <location>
        <begin position="60"/>
        <end position="79"/>
    </location>
</feature>
<feature type="compositionally biased region" description="Basic and acidic residues" evidence="2">
    <location>
        <begin position="86"/>
        <end position="101"/>
    </location>
</feature>
<feature type="binding site" evidence="1">
    <location>
        <position position="22"/>
    </location>
    <ligand>
        <name>Zn(2+)</name>
        <dbReference type="ChEBI" id="CHEBI:29105"/>
        <label>1</label>
    </ligand>
</feature>
<feature type="binding site" evidence="1">
    <location>
        <position position="25"/>
    </location>
    <ligand>
        <name>Zn(2+)</name>
        <dbReference type="ChEBI" id="CHEBI:29105"/>
        <label>2</label>
    </ligand>
</feature>
<feature type="binding site" evidence="1">
    <location>
        <position position="27"/>
    </location>
    <ligand>
        <name>Zn(2+)</name>
        <dbReference type="ChEBI" id="CHEBI:29105"/>
        <label>2</label>
    </ligand>
</feature>
<feature type="binding site" evidence="1">
    <location>
        <position position="30"/>
    </location>
    <ligand>
        <name>Zn(2+)</name>
        <dbReference type="ChEBI" id="CHEBI:29105"/>
        <label>2</label>
    </ligand>
</feature>
<feature type="binding site" evidence="1">
    <location>
        <position position="33"/>
    </location>
    <ligand>
        <name>Zn(2+)</name>
        <dbReference type="ChEBI" id="CHEBI:29105"/>
        <label>1</label>
    </ligand>
</feature>
<feature type="binding site" evidence="1">
    <location>
        <position position="34"/>
    </location>
    <ligand>
        <name>Zn(2+)</name>
        <dbReference type="ChEBI" id="CHEBI:29105"/>
        <label>1</label>
    </ligand>
</feature>
<feature type="binding site" evidence="1">
    <location>
        <position position="37"/>
    </location>
    <ligand>
        <name>Zn(2+)</name>
        <dbReference type="ChEBI" id="CHEBI:29105"/>
        <label>1</label>
    </ligand>
</feature>
<feature type="site" description="Essential for Tat translocation through the endosomal membrane" evidence="1">
    <location>
        <position position="11"/>
    </location>
</feature>
<feature type="modified residue" description="N6-acetyllysine; by host PCAF" evidence="1">
    <location>
        <position position="28"/>
    </location>
</feature>
<feature type="modified residue" description="N6-acetyllysine; by host EP300 and GCN5L2" evidence="1">
    <location>
        <position position="50"/>
    </location>
</feature>
<feature type="modified residue" description="N6-acetyllysine; by host EP300 and GCN5L2" evidence="1">
    <location>
        <position position="51"/>
    </location>
</feature>
<feature type="modified residue" description="Asymmetric dimethylarginine; by host PRMT6" evidence="1">
    <location>
        <position position="52"/>
    </location>
</feature>
<feature type="modified residue" description="Asymmetric dimethylarginine; by host PRMT6" evidence="1">
    <location>
        <position position="53"/>
    </location>
</feature>
<feature type="cross-link" description="Glycyl lysine isopeptide (Lys-Gly) (interchain with G-Cter in ubiquitin)" evidence="1">
    <location>
        <position position="71"/>
    </location>
</feature>
<feature type="splice variant" id="VSP_022406" description="In isoform Short.">
    <location>
        <begin position="73"/>
        <end position="101"/>
    </location>
</feature>
<keyword id="KW-0007">Acetylation</keyword>
<keyword id="KW-0010">Activator</keyword>
<keyword id="KW-0014">AIDS</keyword>
<keyword id="KW-0025">Alternative splicing</keyword>
<keyword id="KW-0053">Apoptosis</keyword>
<keyword id="KW-1035">Host cytoplasm</keyword>
<keyword id="KW-1048">Host nucleus</keyword>
<keyword id="KW-0945">Host-virus interaction</keyword>
<keyword id="KW-1090">Inhibition of host innate immune response by virus</keyword>
<keyword id="KW-1114">Inhibition of host interferon signaling pathway by virus</keyword>
<keyword id="KW-0922">Interferon antiviral system evasion</keyword>
<keyword id="KW-1017">Isopeptide bond</keyword>
<keyword id="KW-0479">Metal-binding</keyword>
<keyword id="KW-0488">Methylation</keyword>
<keyword id="KW-1122">Modulation of host chromatin by virus</keyword>
<keyword id="KW-1126">Modulation of host PP1 activity by virus</keyword>
<keyword id="KW-0597">Phosphoprotein</keyword>
<keyword id="KW-1185">Reference proteome</keyword>
<keyword id="KW-0694">RNA-binding</keyword>
<keyword id="KW-0964">Secreted</keyword>
<keyword id="KW-0804">Transcription</keyword>
<keyword id="KW-0805">Transcription regulation</keyword>
<keyword id="KW-0832">Ubl conjugation</keyword>
<keyword id="KW-0899">Viral immunoevasion</keyword>
<keyword id="KW-0862">Zinc</keyword>
<protein>
    <recommendedName>
        <fullName evidence="1">Protein Tat</fullName>
    </recommendedName>
    <alternativeName>
        <fullName evidence="1">Transactivating regulatory protein</fullName>
    </alternativeName>
</protein>
<proteinExistence type="inferred from homology"/>
<comment type="function">
    <text evidence="1">Transcriptional activator that increases RNA Pol II processivity, thereby increasing the level of full-length viral transcripts. Recognizes a hairpin structure at the 5'-LTR of the nascent viral mRNAs referred to as the transactivation responsive RNA element (TAR) and recruits the cyclin T1-CDK9 complex (P-TEFb complex) that will in turn hyperphosphorylate the RNA polymerase II to allow efficient elongation. The CDK9 component of P-TEFb and other Tat-activated kinases hyperphosphorylate the C-terminus of RNA Pol II that becomes stabilized and much more processive. Other factors such as HTATSF1/Tat-SF1, SUPT5H/SPT5, and HTATIP2 are also important for Tat's function. Besides its effect on RNA Pol II processivity, Tat induces chromatin remodeling of proviral genes by recruiting the histone acetyltransferases (HATs) CREBBP, EP300 and PCAF to the chromatin. This also contributes to the increase in proviral transcription rate, especially when the provirus integrates in transcriptionally silent region of the host genome. To ensure maximal activation of the LTR, Tat mediates nuclear translocation of NF-kappa-B by interacting with host RELA. Through its interaction with host TBP, Tat may also modulate transcription initiation. Tat can reactivate a latently infected cell by penetrating in it and transactivating its LTR promoter. In the cytoplasm, Tat is thought to act as a translational activator of HIV-1 mRNAs.</text>
</comment>
<comment type="function">
    <text evidence="1">Extracellular circulating Tat can be endocytosed by surrounding uninfected cells via the binding to several surface receptors such as CD26, CXCR4, heparan sulfate proteoglycans (HSPG) or LDLR. Neurons are rarely infected, but they internalize Tat via their LDLR. Through its interaction with nuclear HATs, Tat is potentially able to control the acetylation-dependent cellular gene expression. Modulates the expression of many cellular genes involved in cell survival, proliferation or in coding for cytokines or cytokine receptors. Tat plays a role in T-cell and neurons apoptosis. Tat induced neurotoxicity and apoptosis probably contribute to neuroAIDS. Circulating Tat also acts as a chemokine-like and/or growth factor-like molecule that binds to specific receptors on the surface of the cells, affecting many cellular pathways. In the vascular system, Tat binds to ITGAV/ITGB3 and ITGA5/ITGB1 integrins dimers at the surface of endothelial cells and competes with bFGF for heparin-binding sites, leading to an excess of soluble bFGF.</text>
</comment>
<comment type="subunit">
    <text evidence="1">Interacts with host CCNT1. Associates with the P-TEFb complex composed at least of Tat, P-TEFb (CDK9 and CCNT1), TAR RNA, RNA Pol II. Recruits the HATs CREBBP, TAF1/TFIID, EP300, PCAF and GCN5L2. Interacts with host KAT5/Tip60; this interaction targets the latter to degradation. Interacts with the host deacetylase SIRT1. Interacts with host capping enzyme RNGTT; this interaction stimulates RNGTT. Binds to host KDR, and to the host integrins ITGAV/ITGB3 and ITGA5/ITGB1. Interacts with host KPNB1/importin beta-1 without previous binding to KPNA1/importin alpha-1. Interacts with EIF2AK2. Interacts with host nucleosome assembly protein NAP1L1; this interaction may be required for the transport of Tat within the nucleus, since the two proteins interact at the nuclear rim. Interacts with host C1QBP/SF2P32; this interaction involves lysine-acetylated Tat. Interacts with the host chemokine receptors CCR2, CCR3 and CXCR4. Interacts with host DPP4/CD26; this interaction may trigger an anti-proliferative effect. Interacts with host LDLR. Interacts with the host extracellular matrix metalloproteinase MMP1. Interacts with host PRMT6; this interaction mediates Tat's methylation. Interacts with, and is ubiquitinated by MDM2/Hdm2. Interacts with host PSMC3 and HTATIP2. Interacts with STAB1; this interaction may overcome SATB1-mediated repression of IL2 and IL2RA (interleukin) in T cells by binding to the same domain than HDAC1. Interacts (when acetylated) with human CDK13, thereby increasing HIV-1 mRNA splicing and promoting the production of the doubly spliced HIV-1 protein Nef. Interacts with host TBP; this interaction modulates the activity of transcriptional pre-initiation complex. Interacts with host RELA. Interacts with host PLSCR1; this interaction negatively regulates Tat transactivation activity by altering its subcellular distribution.</text>
</comment>
<comment type="subcellular location">
    <subcellularLocation>
        <location evidence="1">Host nucleus</location>
        <location evidence="1">Host nucleolus</location>
    </subcellularLocation>
    <subcellularLocation>
        <location evidence="1">Host cytoplasm</location>
    </subcellularLocation>
    <subcellularLocation>
        <location evidence="1">Secreted</location>
    </subcellularLocation>
    <text evidence="1">Probably localizes to both nuclear and nucleolar compartments. Nuclear localization is mediated through the interaction of the nuclear localization signal with importin KPNB1. Secretion occurs through a Golgi-independent pathway. Tat is released from infected cells to the extracellular space where it remains associated to the cell membrane, or is secreted into the cerebrospinal fluid and sera. Extracellular Tat can be endocytosed by surrounding uninfected cells via binding to several receptors depending on the cell type.</text>
</comment>
<comment type="alternative products">
    <event type="alternative splicing"/>
    <isoform>
        <id>P04614-1</id>
        <name>Long</name>
        <sequence type="displayed"/>
    </isoform>
    <isoform>
        <id>P04614-2</id>
        <name>Short</name>
        <sequence type="described" ref="VSP_022406"/>
    </isoform>
</comment>
<comment type="domain">
    <text evidence="1">The cell attachment site mediates the interaction with ITGAV/ITGB3 and ITGA5/ITGB1 integrins, leading to vascular cell migration and invasion. This interaction also provides endothelial cells with the adhesion signal they require to grow in response to mitogens.</text>
</comment>
<comment type="domain">
    <text evidence="1">The Cys-rich region may bind 2 zinc ions. This region is involved in binding to KAT5.</text>
</comment>
<comment type="domain">
    <text evidence="1">The transactivation domain mediates the interaction with CCNT1, GCN5L2, and MDM2.</text>
</comment>
<comment type="domain">
    <text evidence="1">The Arg-rich RNA-binding region binds the TAR RNA. This region also mediates the nuclear localization through direct binding to KPNB1 and is involved in Tat's transfer across cell membranes (protein transduction). The same region is required for the interaction with EP300, PCAF, EIF2AK2 and KDR.</text>
</comment>
<comment type="PTM">
    <text evidence="1">Asymmetrical arginine methylation by host PRMT6 seems to diminish the transactivation capacity of Tat and affects the interaction with host CCNT1.</text>
</comment>
<comment type="PTM">
    <text evidence="1">Acetylation by EP300, CREBBP, GCN5L2/GCN5 and PCAF regulates the transactivation activity of Tat. EP300-mediated acetylation of Lys-50 promotes dissociation of Tat from the TAR RNA through the competitive binding to PCAF's bromodomain. In addition, the non-acetylated Tat's N-terminus can also interact with PCAF. PCAF-mediated acetylation of Lys-28 enhances Tat's binding to CCNT1. Lys-50 is deacetylated by SIRT1.</text>
</comment>
<comment type="PTM">
    <text evidence="1">Polyubiquitination by host MDM2 does not target Tat to degradation, but activates its transactivation function and fosters interaction with CCNT1 and TAR RNA.</text>
</comment>
<comment type="PTM">
    <text evidence="1">Phosphorylated by EIF2AK2 on serine and threonine residues adjacent to the basic region important for TAR RNA binding and function. Phosphorylation of Tat by EIF2AK2 is dependent on the prior activation of EIF2AK2 by dsRNA.</text>
</comment>
<comment type="miscellaneous">
    <text evidence="1">HIV-1 lineages are divided in three main groups, M (for Major), O (for Outlier), and N (for New, or Non-M, Non-O). The vast majority of strains found worldwide belong to the group M. Group O seems to be endemic to and largely confined to Cameroon and neighboring countries in West Central Africa, where these viruses represent a small minority of HIV-1 strains. The group N is represented by a limited number of isolates from Cameroonian persons. The group M is further subdivided in 9 clades or subtypes (A to D, F to H, J and K).</text>
</comment>
<comment type="miscellaneous">
    <molecule>Isoform Short</molecule>
    <text evidence="3">Expressed in the late stage of the infection cycle, when unspliced viral RNAs are exported to the cytoplasm by the viral Rev protein.</text>
</comment>
<comment type="similarity">
    <text evidence="1">Belongs to the lentiviruses Tat family.</text>
</comment>
<gene>
    <name evidence="1" type="primary">tat</name>
</gene>
<accession>P04614</accession>
<organismHost>
    <name type="scientific">Homo sapiens</name>
    <name type="common">Human</name>
    <dbReference type="NCBI Taxonomy" id="9606"/>
</organismHost>
<organism>
    <name type="scientific">Human immunodeficiency virus type 1 group M subtype B (isolate ARV2/SF2)</name>
    <name type="common">HIV-1</name>
    <dbReference type="NCBI Taxonomy" id="11685"/>
    <lineage>
        <taxon>Viruses</taxon>
        <taxon>Riboviria</taxon>
        <taxon>Pararnavirae</taxon>
        <taxon>Artverviricota</taxon>
        <taxon>Revtraviricetes</taxon>
        <taxon>Ortervirales</taxon>
        <taxon>Retroviridae</taxon>
        <taxon>Orthoretrovirinae</taxon>
        <taxon>Lentivirus</taxon>
        <taxon>Human immunodeficiency virus type 1</taxon>
    </lineage>
</organism>
<sequence>MEPVDPNLEPWKHPGSQPRTACNNCYCKKCCFHCYACFTRKGLGISYGRKKRRQRRRAPQDSQTHQASLSKQPASQSRGDPTGPTESKKKVERETETDPFD</sequence>